<feature type="chain" id="PRO_0000110528" description="Inositol-pentakisphosphate 2-kinase">
    <location>
        <begin position="1"/>
        <end position="281"/>
    </location>
</feature>
<feature type="short sequence motif" description="EXKPK motif">
    <location>
        <begin position="123"/>
        <end position="127"/>
    </location>
</feature>
<feature type="mutagenesis site" description="More than 95% loss of activity." evidence="2">
    <original>N</original>
    <variation>D</variation>
    <location>
        <position position="10"/>
    </location>
</feature>
<feature type="mutagenesis site" description="More than 95% loss of activity." evidence="2">
    <original>C</original>
    <variation>Y</variation>
    <location>
        <position position="139"/>
    </location>
</feature>
<name>IPK1_YEAST</name>
<sequence>MQVIGRGGANILIDYGDPTWLWRCCIRWPDLLSSNNSYTIKNISYIKDYVEPLLHGLLCPMYLIDVDIEAIRPILSDFILNLDDKVVKVIKIKNLTNNTSNLILNNHFLKSYCSQNLQTVILELKPKWLYYDTDYCRNCTHNAFKGRGTKYCYNQLLMNPAHLELIFGECNIFPVKFKDAMHEYLRNDNNIFKILYDLQKKLTKNTTPISDIKSINDVNDEHLLLMTLRDVTCFIEWNSAENALHVNIIDVDLKPKEKWTHWTKTYSQLTSSQKIYHTSNK</sequence>
<evidence type="ECO:0000269" key="1">
    <source>
    </source>
</evidence>
<evidence type="ECO:0000269" key="2">
    <source>
    </source>
</evidence>
<evidence type="ECO:0000305" key="3"/>
<evidence type="ECO:0000305" key="4">
    <source>
    </source>
</evidence>
<keyword id="KW-0067">ATP-binding</keyword>
<keyword id="KW-0418">Kinase</keyword>
<keyword id="KW-0547">Nucleotide-binding</keyword>
<keyword id="KW-0539">Nucleus</keyword>
<keyword id="KW-1185">Reference proteome</keyword>
<keyword id="KW-0808">Transferase</keyword>
<accession>Q06667</accession>
<accession>D6VSU4</accession>
<dbReference type="EC" id="2.7.1.158" evidence="2"/>
<dbReference type="EMBL" id="U28374">
    <property type="protein sequence ID" value="AAB64751.1"/>
    <property type="molecule type" value="Genomic_DNA"/>
</dbReference>
<dbReference type="EMBL" id="AY557740">
    <property type="protein sequence ID" value="AAS56066.1"/>
    <property type="molecule type" value="Genomic_DNA"/>
</dbReference>
<dbReference type="EMBL" id="BK006938">
    <property type="protein sequence ID" value="DAA12154.1"/>
    <property type="molecule type" value="Genomic_DNA"/>
</dbReference>
<dbReference type="PIR" id="S61201">
    <property type="entry name" value="S61201"/>
</dbReference>
<dbReference type="RefSeq" id="NP_010601.3">
    <property type="nucleotide sequence ID" value="NM_001180623.3"/>
</dbReference>
<dbReference type="SMR" id="Q06667"/>
<dbReference type="BioGRID" id="32368">
    <property type="interactions" value="473"/>
</dbReference>
<dbReference type="DIP" id="DIP-1388N"/>
<dbReference type="FunCoup" id="Q06667">
    <property type="interactions" value="59"/>
</dbReference>
<dbReference type="IntAct" id="Q06667">
    <property type="interactions" value="4"/>
</dbReference>
<dbReference type="MINT" id="Q06667"/>
<dbReference type="STRING" id="4932.YDR315C"/>
<dbReference type="PaxDb" id="4932-YDR315C"/>
<dbReference type="PeptideAtlas" id="Q06667"/>
<dbReference type="EnsemblFungi" id="YDR315C_mRNA">
    <property type="protein sequence ID" value="YDR315C"/>
    <property type="gene ID" value="YDR315C"/>
</dbReference>
<dbReference type="GeneID" id="851910"/>
<dbReference type="KEGG" id="sce:YDR315C"/>
<dbReference type="AGR" id="SGD:S000002723"/>
<dbReference type="SGD" id="S000002723">
    <property type="gene designation" value="IPK1"/>
</dbReference>
<dbReference type="VEuPathDB" id="FungiDB:YDR315C"/>
<dbReference type="eggNOG" id="ENOG502S05I">
    <property type="taxonomic scope" value="Eukaryota"/>
</dbReference>
<dbReference type="HOGENOM" id="CLU_046294_1_0_1"/>
<dbReference type="InParanoid" id="Q06667"/>
<dbReference type="OMA" id="FIELRCK"/>
<dbReference type="OrthoDB" id="272370at2759"/>
<dbReference type="BioCyc" id="MetaCyc:YDR315C-MONOMER"/>
<dbReference type="BioCyc" id="YEAST:YDR315C-MONOMER"/>
<dbReference type="BioGRID-ORCS" id="851910">
    <property type="hits" value="0 hits in 10 CRISPR screens"/>
</dbReference>
<dbReference type="PRO" id="PR:Q06667"/>
<dbReference type="Proteomes" id="UP000002311">
    <property type="component" value="Chromosome IV"/>
</dbReference>
<dbReference type="RNAct" id="Q06667">
    <property type="molecule type" value="protein"/>
</dbReference>
<dbReference type="GO" id="GO:0005634">
    <property type="term" value="C:nucleus"/>
    <property type="evidence" value="ECO:0000314"/>
    <property type="project" value="SGD"/>
</dbReference>
<dbReference type="GO" id="GO:0005524">
    <property type="term" value="F:ATP binding"/>
    <property type="evidence" value="ECO:0007669"/>
    <property type="project" value="UniProtKB-KW"/>
</dbReference>
<dbReference type="GO" id="GO:0035299">
    <property type="term" value="F:inositol-1,3,4,5,6-pentakisphosphate 2-kinase activity"/>
    <property type="evidence" value="ECO:0000314"/>
    <property type="project" value="SGD"/>
</dbReference>
<dbReference type="GO" id="GO:0032958">
    <property type="term" value="P:inositol phosphate biosynthetic process"/>
    <property type="evidence" value="ECO:0000314"/>
    <property type="project" value="SGD"/>
</dbReference>
<dbReference type="GO" id="GO:0070481">
    <property type="term" value="P:nuclear-transcribed mRNA catabolic process, non-stop decay"/>
    <property type="evidence" value="ECO:0000315"/>
    <property type="project" value="SGD"/>
</dbReference>
<dbReference type="InterPro" id="IPR009286">
    <property type="entry name" value="Ins_P5_2-kin"/>
</dbReference>
<dbReference type="PANTHER" id="PTHR14456">
    <property type="entry name" value="INOSITOL POLYPHOSPHATE KINASE 1"/>
    <property type="match status" value="1"/>
</dbReference>
<dbReference type="PANTHER" id="PTHR14456:SF2">
    <property type="entry name" value="INOSITOL-PENTAKISPHOSPHATE 2-KINASE"/>
    <property type="match status" value="1"/>
</dbReference>
<dbReference type="Pfam" id="PF06090">
    <property type="entry name" value="Ins_P5_2-kin"/>
    <property type="match status" value="2"/>
</dbReference>
<reference key="1">
    <citation type="journal article" date="1997" name="Nature">
        <title>The nucleotide sequence of Saccharomyces cerevisiae chromosome IV.</title>
        <authorList>
            <person name="Jacq C."/>
            <person name="Alt-Moerbe J."/>
            <person name="Andre B."/>
            <person name="Arnold W."/>
            <person name="Bahr A."/>
            <person name="Ballesta J.P.G."/>
            <person name="Bargues M."/>
            <person name="Baron L."/>
            <person name="Becker A."/>
            <person name="Biteau N."/>
            <person name="Bloecker H."/>
            <person name="Blugeon C."/>
            <person name="Boskovic J."/>
            <person name="Brandt P."/>
            <person name="Brueckner M."/>
            <person name="Buitrago M.J."/>
            <person name="Coster F."/>
            <person name="Delaveau T."/>
            <person name="del Rey F."/>
            <person name="Dujon B."/>
            <person name="Eide L.G."/>
            <person name="Garcia-Cantalejo J.M."/>
            <person name="Goffeau A."/>
            <person name="Gomez-Peris A."/>
            <person name="Granotier C."/>
            <person name="Hanemann V."/>
            <person name="Hankeln T."/>
            <person name="Hoheisel J.D."/>
            <person name="Jaeger W."/>
            <person name="Jimenez A."/>
            <person name="Jonniaux J.-L."/>
            <person name="Kraemer C."/>
            <person name="Kuester H."/>
            <person name="Laamanen P."/>
            <person name="Legros Y."/>
            <person name="Louis E.J."/>
            <person name="Moeller-Rieker S."/>
            <person name="Monnet A."/>
            <person name="Moro M."/>
            <person name="Mueller-Auer S."/>
            <person name="Nussbaumer B."/>
            <person name="Paricio N."/>
            <person name="Paulin L."/>
            <person name="Perea J."/>
            <person name="Perez-Alonso M."/>
            <person name="Perez-Ortin J.E."/>
            <person name="Pohl T.M."/>
            <person name="Prydz H."/>
            <person name="Purnelle B."/>
            <person name="Rasmussen S.W."/>
            <person name="Remacha M.A."/>
            <person name="Revuelta J.L."/>
            <person name="Rieger M."/>
            <person name="Salom D."/>
            <person name="Saluz H.P."/>
            <person name="Saiz J.E."/>
            <person name="Saren A.-M."/>
            <person name="Schaefer M."/>
            <person name="Scharfe M."/>
            <person name="Schmidt E.R."/>
            <person name="Schneider C."/>
            <person name="Scholler P."/>
            <person name="Schwarz S."/>
            <person name="Soler-Mira A."/>
            <person name="Urrestarazu L.A."/>
            <person name="Verhasselt P."/>
            <person name="Vissers S."/>
            <person name="Voet M."/>
            <person name="Volckaert G."/>
            <person name="Wagner G."/>
            <person name="Wambutt R."/>
            <person name="Wedler E."/>
            <person name="Wedler H."/>
            <person name="Woelfl S."/>
            <person name="Harris D.E."/>
            <person name="Bowman S."/>
            <person name="Brown D."/>
            <person name="Churcher C.M."/>
            <person name="Connor R."/>
            <person name="Dedman K."/>
            <person name="Gentles S."/>
            <person name="Hamlin N."/>
            <person name="Hunt S."/>
            <person name="Jones L."/>
            <person name="McDonald S."/>
            <person name="Murphy L.D."/>
            <person name="Niblett D."/>
            <person name="Odell C."/>
            <person name="Oliver K."/>
            <person name="Rajandream M.A."/>
            <person name="Richards C."/>
            <person name="Shore L."/>
            <person name="Walsh S.V."/>
            <person name="Barrell B.G."/>
            <person name="Dietrich F.S."/>
            <person name="Mulligan J.T."/>
            <person name="Allen E."/>
            <person name="Araujo R."/>
            <person name="Aviles E."/>
            <person name="Berno A."/>
            <person name="Carpenter J."/>
            <person name="Chen E."/>
            <person name="Cherry J.M."/>
            <person name="Chung E."/>
            <person name="Duncan M."/>
            <person name="Hunicke-Smith S."/>
            <person name="Hyman R.W."/>
            <person name="Komp C."/>
            <person name="Lashkari D."/>
            <person name="Lew H."/>
            <person name="Lin D."/>
            <person name="Mosedale D."/>
            <person name="Nakahara K."/>
            <person name="Namath A."/>
            <person name="Oefner P."/>
            <person name="Oh C."/>
            <person name="Petel F.X."/>
            <person name="Roberts D."/>
            <person name="Schramm S."/>
            <person name="Schroeder M."/>
            <person name="Shogren T."/>
            <person name="Shroff N."/>
            <person name="Winant A."/>
            <person name="Yelton M.A."/>
            <person name="Botstein D."/>
            <person name="Davis R.W."/>
            <person name="Johnston M."/>
            <person name="Andrews S."/>
            <person name="Brinkman R."/>
            <person name="Cooper J."/>
            <person name="Ding H."/>
            <person name="Du Z."/>
            <person name="Favello A."/>
            <person name="Fulton L."/>
            <person name="Gattung S."/>
            <person name="Greco T."/>
            <person name="Hallsworth K."/>
            <person name="Hawkins J."/>
            <person name="Hillier L.W."/>
            <person name="Jier M."/>
            <person name="Johnson D."/>
            <person name="Johnston L."/>
            <person name="Kirsten J."/>
            <person name="Kucaba T."/>
            <person name="Langston Y."/>
            <person name="Latreille P."/>
            <person name="Le T."/>
            <person name="Mardis E."/>
            <person name="Menezes S."/>
            <person name="Miller N."/>
            <person name="Nhan M."/>
            <person name="Pauley A."/>
            <person name="Peluso D."/>
            <person name="Rifkin L."/>
            <person name="Riles L."/>
            <person name="Taich A."/>
            <person name="Trevaskis E."/>
            <person name="Vignati D."/>
            <person name="Wilcox L."/>
            <person name="Wohldman P."/>
            <person name="Vaudin M."/>
            <person name="Wilson R."/>
            <person name="Waterston R."/>
            <person name="Albermann K."/>
            <person name="Hani J."/>
            <person name="Heumann K."/>
            <person name="Kleine K."/>
            <person name="Mewes H.-W."/>
            <person name="Zollner A."/>
            <person name="Zaccaria P."/>
        </authorList>
    </citation>
    <scope>NUCLEOTIDE SEQUENCE [LARGE SCALE GENOMIC DNA]</scope>
    <source>
        <strain>ATCC 204508 / S288c</strain>
    </source>
</reference>
<reference key="2">
    <citation type="journal article" date="2014" name="G3 (Bethesda)">
        <title>The reference genome sequence of Saccharomyces cerevisiae: Then and now.</title>
        <authorList>
            <person name="Engel S.R."/>
            <person name="Dietrich F.S."/>
            <person name="Fisk D.G."/>
            <person name="Binkley G."/>
            <person name="Balakrishnan R."/>
            <person name="Costanzo M.C."/>
            <person name="Dwight S.S."/>
            <person name="Hitz B.C."/>
            <person name="Karra K."/>
            <person name="Nash R.S."/>
            <person name="Weng S."/>
            <person name="Wong E.D."/>
            <person name="Lloyd P."/>
            <person name="Skrzypek M.S."/>
            <person name="Miyasato S.R."/>
            <person name="Simison M."/>
            <person name="Cherry J.M."/>
        </authorList>
    </citation>
    <scope>GENOME REANNOTATION</scope>
    <source>
        <strain>ATCC 204508 / S288c</strain>
    </source>
</reference>
<reference key="3">
    <citation type="journal article" date="2007" name="Genome Res.">
        <title>Approaching a complete repository of sequence-verified protein-encoding clones for Saccharomyces cerevisiae.</title>
        <authorList>
            <person name="Hu Y."/>
            <person name="Rolfs A."/>
            <person name="Bhullar B."/>
            <person name="Murthy T.V.S."/>
            <person name="Zhu C."/>
            <person name="Berger M.F."/>
            <person name="Camargo A.A."/>
            <person name="Kelley F."/>
            <person name="McCarron S."/>
            <person name="Jepson D."/>
            <person name="Richardson A."/>
            <person name="Raphael J."/>
            <person name="Moreira D."/>
            <person name="Taycher E."/>
            <person name="Zuo D."/>
            <person name="Mohr S."/>
            <person name="Kane M.F."/>
            <person name="Williamson J."/>
            <person name="Simpson A.J.G."/>
            <person name="Bulyk M.L."/>
            <person name="Harlow E."/>
            <person name="Marsischky G."/>
            <person name="Kolodner R.D."/>
            <person name="LaBaer J."/>
        </authorList>
    </citation>
    <scope>NUCLEOTIDE SEQUENCE [GENOMIC DNA]</scope>
    <source>
        <strain>ATCC 204508 / S288c</strain>
    </source>
</reference>
<reference key="4">
    <citation type="journal article" date="1999" name="Science">
        <title>A phospholipase C-dependent inositol polyphosphate kinase pathway required for efficient messenger RNA export.</title>
        <authorList>
            <person name="York J.D."/>
            <person name="Odom A.R."/>
            <person name="Murphy R."/>
            <person name="Ives E.B."/>
            <person name="Wente S.R."/>
        </authorList>
    </citation>
    <scope>SUBCELLULAR LOCATION</scope>
</reference>
<reference key="5">
    <citation type="journal article" date="2000" name="J. Biol. Chem.">
        <title>Biochemical and functional characterization of inositol 1,3,4,5, 6-pentakisphosphate 2-kinases.</title>
        <authorList>
            <person name="Ives E.B."/>
            <person name="Nichols J."/>
            <person name="Wente S.R."/>
            <person name="York J.D."/>
        </authorList>
    </citation>
    <scope>FUNCTION</scope>
    <scope>CATALYTIC ACTIVITY</scope>
    <scope>MUTAGENESIS OF ASN-10 AND CYS-139</scope>
    <scope>BIOPHYSICOCHEMICAL PROPERTIES</scope>
</reference>
<comment type="function">
    <text evidence="2">Has kinase activity and phosphorylates inositol-1,3,4,5,6-pentakisphosphate (Ins(1,3,4,5,6)P5) to produce 1,2,3,4,5,6-hexakisphosphate (InsP6), also known as phytate.</text>
</comment>
<comment type="catalytic activity">
    <reaction evidence="2">
        <text>1D-myo-inositol 1,3,4,5,6-pentakisphosphate + ATP = 1D-myo-inositol hexakisphosphate + ADP + H(+)</text>
        <dbReference type="Rhea" id="RHEA:20313"/>
        <dbReference type="ChEBI" id="CHEBI:15378"/>
        <dbReference type="ChEBI" id="CHEBI:30616"/>
        <dbReference type="ChEBI" id="CHEBI:57733"/>
        <dbReference type="ChEBI" id="CHEBI:58130"/>
        <dbReference type="ChEBI" id="CHEBI:456216"/>
        <dbReference type="EC" id="2.7.1.158"/>
    </reaction>
    <physiologicalReaction direction="left-to-right" evidence="4">
        <dbReference type="Rhea" id="RHEA:20314"/>
    </physiologicalReaction>
</comment>
<comment type="biophysicochemical properties">
    <kinetics>
        <KM evidence="2">644 nM for IP5</KM>
        <KM evidence="2">62.8 uM for ATP</KM>
    </kinetics>
</comment>
<comment type="subcellular location">
    <subcellularLocation>
        <location evidence="1">Nucleus</location>
    </subcellularLocation>
</comment>
<comment type="domain">
    <text>The EXKPK motif is conserved in inositol-pentakisphosphate 2-kinases of both family 1 and 2.</text>
</comment>
<comment type="similarity">
    <text evidence="3">Belongs to the IPK1 type 1 family.</text>
</comment>
<protein>
    <recommendedName>
        <fullName>Inositol-pentakisphosphate 2-kinase</fullName>
        <ecNumber evidence="2">2.7.1.158</ecNumber>
    </recommendedName>
    <alternativeName>
        <fullName>Inositol-1,3,4,5,6-pentakisphosphate 2-kinase</fullName>
    </alternativeName>
    <alternativeName>
        <fullName>Ins(1,3,4,5,6)P5 2-kinase</fullName>
        <shortName>InsP5 2-kinase</shortName>
    </alternativeName>
</protein>
<gene>
    <name type="primary">IPK1</name>
    <name type="synonym">GSL1</name>
    <name type="ordered locus">YDR315C</name>
</gene>
<proteinExistence type="evidence at protein level"/>
<organism>
    <name type="scientific">Saccharomyces cerevisiae (strain ATCC 204508 / S288c)</name>
    <name type="common">Baker's yeast</name>
    <dbReference type="NCBI Taxonomy" id="559292"/>
    <lineage>
        <taxon>Eukaryota</taxon>
        <taxon>Fungi</taxon>
        <taxon>Dikarya</taxon>
        <taxon>Ascomycota</taxon>
        <taxon>Saccharomycotina</taxon>
        <taxon>Saccharomycetes</taxon>
        <taxon>Saccharomycetales</taxon>
        <taxon>Saccharomycetaceae</taxon>
        <taxon>Saccharomyces</taxon>
    </lineage>
</organism>